<accession>B4RNN0</accession>
<dbReference type="EC" id="2.3.1.117" evidence="1"/>
<dbReference type="EMBL" id="CP001050">
    <property type="protein sequence ID" value="ACF30663.1"/>
    <property type="molecule type" value="Genomic_DNA"/>
</dbReference>
<dbReference type="RefSeq" id="WP_003689804.1">
    <property type="nucleotide sequence ID" value="NC_011035.1"/>
</dbReference>
<dbReference type="SMR" id="B4RNN0"/>
<dbReference type="GeneID" id="66753947"/>
<dbReference type="KEGG" id="ngk:NGK_2054"/>
<dbReference type="HOGENOM" id="CLU_050859_0_1_4"/>
<dbReference type="UniPathway" id="UPA00034">
    <property type="reaction ID" value="UER00019"/>
</dbReference>
<dbReference type="Proteomes" id="UP000002564">
    <property type="component" value="Chromosome"/>
</dbReference>
<dbReference type="GO" id="GO:0005737">
    <property type="term" value="C:cytoplasm"/>
    <property type="evidence" value="ECO:0007669"/>
    <property type="project" value="UniProtKB-SubCell"/>
</dbReference>
<dbReference type="GO" id="GO:0008666">
    <property type="term" value="F:2,3,4,5-tetrahydropyridine-2,6-dicarboxylate N-succinyltransferase activity"/>
    <property type="evidence" value="ECO:0007669"/>
    <property type="project" value="UniProtKB-UniRule"/>
</dbReference>
<dbReference type="GO" id="GO:0016779">
    <property type="term" value="F:nucleotidyltransferase activity"/>
    <property type="evidence" value="ECO:0007669"/>
    <property type="project" value="TreeGrafter"/>
</dbReference>
<dbReference type="GO" id="GO:0019877">
    <property type="term" value="P:diaminopimelate biosynthetic process"/>
    <property type="evidence" value="ECO:0007669"/>
    <property type="project" value="UniProtKB-UniRule"/>
</dbReference>
<dbReference type="GO" id="GO:0009089">
    <property type="term" value="P:lysine biosynthetic process via diaminopimelate"/>
    <property type="evidence" value="ECO:0007669"/>
    <property type="project" value="UniProtKB-UniRule"/>
</dbReference>
<dbReference type="CDD" id="cd03350">
    <property type="entry name" value="LbH_THP_succinylT"/>
    <property type="match status" value="1"/>
</dbReference>
<dbReference type="Gene3D" id="2.160.10.10">
    <property type="entry name" value="Hexapeptide repeat proteins"/>
    <property type="match status" value="1"/>
</dbReference>
<dbReference type="Gene3D" id="1.10.166.10">
    <property type="entry name" value="Tetrahydrodipicolinate-N-succinyltransferase, N-terminal domain"/>
    <property type="match status" value="1"/>
</dbReference>
<dbReference type="HAMAP" id="MF_00811">
    <property type="entry name" value="DapD"/>
    <property type="match status" value="1"/>
</dbReference>
<dbReference type="InterPro" id="IPR005664">
    <property type="entry name" value="DapD_Trfase_Hexpep_rpt_fam"/>
</dbReference>
<dbReference type="InterPro" id="IPR001451">
    <property type="entry name" value="Hexapep"/>
</dbReference>
<dbReference type="InterPro" id="IPR018357">
    <property type="entry name" value="Hexapep_transf_CS"/>
</dbReference>
<dbReference type="InterPro" id="IPR023180">
    <property type="entry name" value="THP_succinylTrfase_dom1"/>
</dbReference>
<dbReference type="InterPro" id="IPR037133">
    <property type="entry name" value="THP_succinylTrfase_N_sf"/>
</dbReference>
<dbReference type="InterPro" id="IPR011004">
    <property type="entry name" value="Trimer_LpxA-like_sf"/>
</dbReference>
<dbReference type="NCBIfam" id="TIGR00965">
    <property type="entry name" value="dapD"/>
    <property type="match status" value="1"/>
</dbReference>
<dbReference type="NCBIfam" id="NF008808">
    <property type="entry name" value="PRK11830.1"/>
    <property type="match status" value="1"/>
</dbReference>
<dbReference type="PANTHER" id="PTHR19136:SF52">
    <property type="entry name" value="2,3,4,5-TETRAHYDROPYRIDINE-2,6-DICARBOXYLATE N-SUCCINYLTRANSFERASE"/>
    <property type="match status" value="1"/>
</dbReference>
<dbReference type="PANTHER" id="PTHR19136">
    <property type="entry name" value="MOLYBDENUM COFACTOR GUANYLYLTRANSFERASE"/>
    <property type="match status" value="1"/>
</dbReference>
<dbReference type="Pfam" id="PF14602">
    <property type="entry name" value="Hexapep_2"/>
    <property type="match status" value="1"/>
</dbReference>
<dbReference type="Pfam" id="PF14805">
    <property type="entry name" value="THDPS_N_2"/>
    <property type="match status" value="1"/>
</dbReference>
<dbReference type="SUPFAM" id="SSF51161">
    <property type="entry name" value="Trimeric LpxA-like enzymes"/>
    <property type="match status" value="1"/>
</dbReference>
<dbReference type="PROSITE" id="PS00101">
    <property type="entry name" value="HEXAPEP_TRANSFERASES"/>
    <property type="match status" value="1"/>
</dbReference>
<gene>
    <name evidence="1" type="primary">dapD</name>
    <name type="ordered locus">NGK_2054</name>
</gene>
<proteinExistence type="inferred from homology"/>
<evidence type="ECO:0000255" key="1">
    <source>
        <dbReference type="HAMAP-Rule" id="MF_00811"/>
    </source>
</evidence>
<feature type="chain" id="PRO_1000134056" description="2,3,4,5-tetrahydropyridine-2,6-dicarboxylate N-succinyltransferase">
    <location>
        <begin position="1"/>
        <end position="273"/>
    </location>
</feature>
<protein>
    <recommendedName>
        <fullName evidence="1">2,3,4,5-tetrahydropyridine-2,6-dicarboxylate N-succinyltransferase</fullName>
        <ecNumber evidence="1">2.3.1.117</ecNumber>
    </recommendedName>
    <alternativeName>
        <fullName evidence="1">Tetrahydrodipicolinate N-succinyltransferase</fullName>
        <shortName evidence="1">THP succinyltransferase</shortName>
        <shortName evidence="1">Tetrahydropicolinate succinylase</shortName>
    </alternativeName>
</protein>
<comment type="catalytic activity">
    <reaction evidence="1">
        <text>(S)-2,3,4,5-tetrahydrodipicolinate + succinyl-CoA + H2O = (S)-2-succinylamino-6-oxoheptanedioate + CoA</text>
        <dbReference type="Rhea" id="RHEA:17325"/>
        <dbReference type="ChEBI" id="CHEBI:15377"/>
        <dbReference type="ChEBI" id="CHEBI:15685"/>
        <dbReference type="ChEBI" id="CHEBI:16845"/>
        <dbReference type="ChEBI" id="CHEBI:57287"/>
        <dbReference type="ChEBI" id="CHEBI:57292"/>
        <dbReference type="EC" id="2.3.1.117"/>
    </reaction>
</comment>
<comment type="pathway">
    <text evidence="1">Amino-acid biosynthesis; L-lysine biosynthesis via DAP pathway; LL-2,6-diaminopimelate from (S)-tetrahydrodipicolinate (succinylase route): step 1/3.</text>
</comment>
<comment type="subcellular location">
    <subcellularLocation>
        <location evidence="1">Cytoplasm</location>
    </subcellularLocation>
</comment>
<comment type="similarity">
    <text evidence="1">Belongs to the transferase hexapeptide repeat family.</text>
</comment>
<name>DAPD_NEIG2</name>
<keyword id="KW-0012">Acyltransferase</keyword>
<keyword id="KW-0028">Amino-acid biosynthesis</keyword>
<keyword id="KW-0963">Cytoplasm</keyword>
<keyword id="KW-0220">Diaminopimelate biosynthesis</keyword>
<keyword id="KW-0457">Lysine biosynthesis</keyword>
<keyword id="KW-0677">Repeat</keyword>
<keyword id="KW-0808">Transferase</keyword>
<reference key="1">
    <citation type="journal article" date="2008" name="J. Bacteriol.">
        <title>Complete genome sequence of Neisseria gonorrhoeae NCCP11945.</title>
        <authorList>
            <person name="Chung G.T."/>
            <person name="Yoo J.S."/>
            <person name="Oh H.B."/>
            <person name="Lee Y.S."/>
            <person name="Cha S.H."/>
            <person name="Kim S.J."/>
            <person name="Yoo C.K."/>
        </authorList>
    </citation>
    <scope>NUCLEOTIDE SEQUENCE [LARGE SCALE GENOMIC DNA]</scope>
    <source>
        <strain>NCCP11945</strain>
    </source>
</reference>
<sequence>MSLQNIIETAFENRADITPTTVAPEVKEAVLETIRQLDSGKLRVAERLGVGEWKVNEWAKKAVLLSFRIQDNEVLNDGVNKYFDKVPTKFADWSEDEFKNAGFRAVPGAVARRGSFVAKNAVLMPSYVNIGAYVDEGAMVDTWATVGSCAQIGKNVHLSGGVGIGGVLEPLQAAPTIIEDNCFIGARSEIVEGAIVEEGSVISMGVFIGQSTKIFDRTTGEIYQGRVPAGSVVVSGSLPSKDGSHSLYCAVIVKRVDAQTRAKTSVNELLRGI</sequence>
<organism>
    <name type="scientific">Neisseria gonorrhoeae (strain NCCP11945)</name>
    <dbReference type="NCBI Taxonomy" id="521006"/>
    <lineage>
        <taxon>Bacteria</taxon>
        <taxon>Pseudomonadati</taxon>
        <taxon>Pseudomonadota</taxon>
        <taxon>Betaproteobacteria</taxon>
        <taxon>Neisseriales</taxon>
        <taxon>Neisseriaceae</taxon>
        <taxon>Neisseria</taxon>
    </lineage>
</organism>